<sequence>MQPEGAEKGKSFKQRLVLKSSLAKETLSEFLGTFILIVLGCGCVAQAILSRGRFGGVITINVGFSMAVAMAIYVAGGVSGGHINPAVSLAMCLFGRMKWFKLPFYVGAQFLGAFVGAATVFGIYYDGLMSFAGGKLLIVGENATAHIFATYPAPYLSLANAFADQVVATMILLIIVFAIFDSRNLGAPRGLEPIAIGLLIIVIASSLGLNSGCAMNPARDLSPRLFTALAGWGFEVFRAGNNFWWIPVVGPLVGAVIGGLIYVLVIEIHHPEPDSVFKTEQSEDKPEKYELSVIM</sequence>
<feature type="chain" id="PRO_0000063964" description="Aquaporin-9">
    <location>
        <begin position="1"/>
        <end position="295"/>
    </location>
</feature>
<feature type="topological domain" description="Cytoplasmic" evidence="2">
    <location>
        <begin position="1"/>
        <end position="24"/>
    </location>
</feature>
<feature type="transmembrane region" description="Helical; Name=1" evidence="2">
    <location>
        <begin position="25"/>
        <end position="43"/>
    </location>
</feature>
<feature type="topological domain" description="Extracellular" evidence="2">
    <location>
        <begin position="44"/>
        <end position="57"/>
    </location>
</feature>
<feature type="transmembrane region" description="Helical; Name=2" evidence="2">
    <location>
        <begin position="58"/>
        <end position="77"/>
    </location>
</feature>
<feature type="topological domain" description="Cytoplasmic" evidence="2">
    <location>
        <begin position="78"/>
        <end position="79"/>
    </location>
</feature>
<feature type="intramembrane region" description="Discontinuously helical" evidence="2">
    <location>
        <begin position="80"/>
        <end position="92"/>
    </location>
</feature>
<feature type="topological domain" description="Cytoplasmic" evidence="2">
    <location>
        <begin position="93"/>
        <end position="98"/>
    </location>
</feature>
<feature type="transmembrane region" description="Helical; Name=3" evidence="2">
    <location>
        <begin position="99"/>
        <end position="123"/>
    </location>
</feature>
<feature type="topological domain" description="Extracellular" evidence="2">
    <location>
        <begin position="124"/>
        <end position="160"/>
    </location>
</feature>
<feature type="transmembrane region" description="Helical; Name=4" evidence="2">
    <location>
        <begin position="161"/>
        <end position="178"/>
    </location>
</feature>
<feature type="topological domain" description="Cytoplasmic" evidence="2">
    <location>
        <begin position="179"/>
        <end position="190"/>
    </location>
</feature>
<feature type="transmembrane region" description="Helical; Name=5" evidence="2">
    <location>
        <begin position="191"/>
        <end position="207"/>
    </location>
</feature>
<feature type="topological domain" description="Extracellular" evidence="2">
    <location>
        <begin position="208"/>
        <end position="210"/>
    </location>
</feature>
<feature type="intramembrane region" description="Discontinuously helical" evidence="2">
    <location>
        <begin position="211"/>
        <end position="225"/>
    </location>
</feature>
<feature type="topological domain" description="Extracellular" evidence="2">
    <location>
        <begin position="226"/>
        <end position="243"/>
    </location>
</feature>
<feature type="transmembrane region" description="Helical; Name=6" evidence="2">
    <location>
        <begin position="244"/>
        <end position="264"/>
    </location>
</feature>
<feature type="topological domain" description="Cytoplasmic" evidence="2">
    <location>
        <begin position="265"/>
        <end position="295"/>
    </location>
</feature>
<feature type="short sequence motif" description="NPA 1" evidence="2">
    <location>
        <begin position="84"/>
        <end position="86"/>
    </location>
</feature>
<feature type="short sequence motif" description="NPA 2" evidence="2">
    <location>
        <begin position="216"/>
        <end position="218"/>
    </location>
</feature>
<feature type="sequence variant" id="VAR_024538" description="In dbSNP:rs1867380." evidence="4 5 9">
    <original>T</original>
    <variation>A</variation>
    <location>
        <position position="279"/>
    </location>
</feature>
<accession>O43315</accession>
<accession>Q9NP32</accession>
<keyword id="KW-1003">Cell membrane</keyword>
<keyword id="KW-0472">Membrane</keyword>
<keyword id="KW-1267">Proteomics identification</keyword>
<keyword id="KW-1185">Reference proteome</keyword>
<keyword id="KW-0677">Repeat</keyword>
<keyword id="KW-0812">Transmembrane</keyword>
<keyword id="KW-1133">Transmembrane helix</keyword>
<keyword id="KW-0813">Transport</keyword>
<dbReference type="EMBL" id="AB008775">
    <property type="protein sequence ID" value="BAA24864.1"/>
    <property type="molecule type" value="mRNA"/>
</dbReference>
<dbReference type="EMBL" id="AF016495">
    <property type="protein sequence ID" value="AAF16677.1"/>
    <property type="molecule type" value="mRNA"/>
</dbReference>
<dbReference type="EMBL" id="AF102870">
    <property type="protein sequence ID" value="AAF27983.1"/>
    <property type="molecule type" value="Genomic_DNA"/>
</dbReference>
<dbReference type="EMBL" id="AC025431">
    <property type="status" value="NOT_ANNOTATED_CDS"/>
    <property type="molecule type" value="Genomic_DNA"/>
</dbReference>
<dbReference type="EMBL" id="AC066616">
    <property type="status" value="NOT_ANNOTATED_CDS"/>
    <property type="molecule type" value="Genomic_DNA"/>
</dbReference>
<dbReference type="EMBL" id="BC026258">
    <property type="protein sequence ID" value="AAH26258.1"/>
    <property type="molecule type" value="mRNA"/>
</dbReference>
<dbReference type="CCDS" id="CCDS10165.1"/>
<dbReference type="PIR" id="JC5973">
    <property type="entry name" value="JC5973"/>
</dbReference>
<dbReference type="RefSeq" id="NP_066190.2">
    <property type="nucleotide sequence ID" value="NM_020980.5"/>
</dbReference>
<dbReference type="SMR" id="O43315"/>
<dbReference type="BioGRID" id="106861">
    <property type="interactions" value="44"/>
</dbReference>
<dbReference type="FunCoup" id="O43315">
    <property type="interactions" value="30"/>
</dbReference>
<dbReference type="IntAct" id="O43315">
    <property type="interactions" value="35"/>
</dbReference>
<dbReference type="STRING" id="9606.ENSP00000219919"/>
<dbReference type="BindingDB" id="O43315"/>
<dbReference type="DrugBank" id="DB09462">
    <property type="generic name" value="Glycerin"/>
</dbReference>
<dbReference type="TCDB" id="1.A.8.9.14">
    <property type="family name" value="the major intrinsic protein (mip) family"/>
</dbReference>
<dbReference type="iPTMnet" id="O43315"/>
<dbReference type="PhosphoSitePlus" id="O43315"/>
<dbReference type="BioMuta" id="AQP9"/>
<dbReference type="MassIVE" id="O43315"/>
<dbReference type="PaxDb" id="9606-ENSP00000219919"/>
<dbReference type="PeptideAtlas" id="O43315"/>
<dbReference type="ProteomicsDB" id="48894"/>
<dbReference type="Antibodypedia" id="53183">
    <property type="antibodies" value="143 antibodies from 26 providers"/>
</dbReference>
<dbReference type="DNASU" id="366"/>
<dbReference type="Ensembl" id="ENST00000219919.9">
    <property type="protein sequence ID" value="ENSP00000219919.4"/>
    <property type="gene ID" value="ENSG00000103569.11"/>
</dbReference>
<dbReference type="GeneID" id="366"/>
<dbReference type="KEGG" id="hsa:366"/>
<dbReference type="MANE-Select" id="ENST00000219919.9">
    <property type="protein sequence ID" value="ENSP00000219919.4"/>
    <property type="RefSeq nucleotide sequence ID" value="NM_020980.5"/>
    <property type="RefSeq protein sequence ID" value="NP_066190.2"/>
</dbReference>
<dbReference type="UCSC" id="uc002aez.3">
    <property type="organism name" value="human"/>
</dbReference>
<dbReference type="AGR" id="HGNC:643"/>
<dbReference type="CTD" id="366"/>
<dbReference type="DisGeNET" id="366"/>
<dbReference type="GeneCards" id="AQP9"/>
<dbReference type="HGNC" id="HGNC:643">
    <property type="gene designation" value="AQP9"/>
</dbReference>
<dbReference type="HPA" id="ENSG00000103569">
    <property type="expression patterns" value="Tissue enriched (liver)"/>
</dbReference>
<dbReference type="MIM" id="602914">
    <property type="type" value="gene+phenotype"/>
</dbReference>
<dbReference type="neXtProt" id="NX_O43315"/>
<dbReference type="OpenTargets" id="ENSG00000103569"/>
<dbReference type="PharmGKB" id="PA24927"/>
<dbReference type="VEuPathDB" id="HostDB:ENSG00000103569"/>
<dbReference type="eggNOG" id="KOG0224">
    <property type="taxonomic scope" value="Eukaryota"/>
</dbReference>
<dbReference type="GeneTree" id="ENSGT00940000160582"/>
<dbReference type="InParanoid" id="O43315"/>
<dbReference type="OMA" id="WGFAVLT"/>
<dbReference type="OrthoDB" id="3222at2759"/>
<dbReference type="PAN-GO" id="O43315">
    <property type="GO annotations" value="7 GO annotations based on evolutionary models"/>
</dbReference>
<dbReference type="PhylomeDB" id="O43315"/>
<dbReference type="TreeFam" id="TF313173"/>
<dbReference type="BioCyc" id="MetaCyc:ENSG00000103569-MONOMER"/>
<dbReference type="PathwayCommons" id="O43315"/>
<dbReference type="Reactome" id="R-HSA-432030">
    <property type="pathway name" value="Transport of glycerol from adipocytes to the liver by Aquaporins"/>
</dbReference>
<dbReference type="Reactome" id="R-HSA-432047">
    <property type="pathway name" value="Passive transport by Aquaporins"/>
</dbReference>
<dbReference type="SignaLink" id="O43315"/>
<dbReference type="SIGNOR" id="O43315"/>
<dbReference type="BioGRID-ORCS" id="366">
    <property type="hits" value="11 hits in 1141 CRISPR screens"/>
</dbReference>
<dbReference type="GeneWiki" id="AQP9"/>
<dbReference type="GenomeRNAi" id="366"/>
<dbReference type="Pharos" id="O43315">
    <property type="development level" value="Tbio"/>
</dbReference>
<dbReference type="PRO" id="PR:O43315"/>
<dbReference type="Proteomes" id="UP000005640">
    <property type="component" value="Chromosome 15"/>
</dbReference>
<dbReference type="RNAct" id="O43315">
    <property type="molecule type" value="protein"/>
</dbReference>
<dbReference type="Bgee" id="ENSG00000103569">
    <property type="expression patterns" value="Expressed in blood and 115 other cell types or tissues"/>
</dbReference>
<dbReference type="ExpressionAtlas" id="O43315">
    <property type="expression patterns" value="baseline and differential"/>
</dbReference>
<dbReference type="GO" id="GO:0016323">
    <property type="term" value="C:basolateral plasma membrane"/>
    <property type="evidence" value="ECO:0000250"/>
    <property type="project" value="UniProtKB"/>
</dbReference>
<dbReference type="GO" id="GO:0043231">
    <property type="term" value="C:intracellular membrane-bounded organelle"/>
    <property type="evidence" value="ECO:0000314"/>
    <property type="project" value="UniProtKB"/>
</dbReference>
<dbReference type="GO" id="GO:0005886">
    <property type="term" value="C:plasma membrane"/>
    <property type="evidence" value="ECO:0000314"/>
    <property type="project" value="UniProtKB"/>
</dbReference>
<dbReference type="GO" id="GO:0015267">
    <property type="term" value="F:channel activity"/>
    <property type="evidence" value="ECO:0000314"/>
    <property type="project" value="UniProtKB"/>
</dbReference>
<dbReference type="GO" id="GO:0015254">
    <property type="term" value="F:glycerol channel activity"/>
    <property type="evidence" value="ECO:0000314"/>
    <property type="project" value="UniProtKB"/>
</dbReference>
<dbReference type="GO" id="GO:0140070">
    <property type="term" value="F:hydrogen peroxide channel activity"/>
    <property type="evidence" value="ECO:0000315"/>
    <property type="project" value="UniProtKB"/>
</dbReference>
<dbReference type="GO" id="GO:0005345">
    <property type="term" value="F:purine nucleobase transmembrane transporter activity"/>
    <property type="evidence" value="ECO:0000250"/>
    <property type="project" value="UniProtKB"/>
</dbReference>
<dbReference type="GO" id="GO:0005350">
    <property type="term" value="F:pyrimidine nucleobase transmembrane transporter activity"/>
    <property type="evidence" value="ECO:0000250"/>
    <property type="project" value="UniProtKB"/>
</dbReference>
<dbReference type="GO" id="GO:0015265">
    <property type="term" value="F:urea channel activity"/>
    <property type="evidence" value="ECO:0000314"/>
    <property type="project" value="UniProtKB"/>
</dbReference>
<dbReference type="GO" id="GO:0015204">
    <property type="term" value="F:urea transmembrane transporter activity"/>
    <property type="evidence" value="ECO:0000250"/>
    <property type="project" value="UniProtKB"/>
</dbReference>
<dbReference type="GO" id="GO:0015250">
    <property type="term" value="F:water channel activity"/>
    <property type="evidence" value="ECO:0000314"/>
    <property type="project" value="UniProtKB"/>
</dbReference>
<dbReference type="GO" id="GO:0015837">
    <property type="term" value="P:amine transport"/>
    <property type="evidence" value="ECO:0000250"/>
    <property type="project" value="UniProtKB"/>
</dbReference>
<dbReference type="GO" id="GO:0071320">
    <property type="term" value="P:cellular response to cAMP"/>
    <property type="evidence" value="ECO:0000270"/>
    <property type="project" value="UniProtKB"/>
</dbReference>
<dbReference type="GO" id="GO:0071722">
    <property type="term" value="P:detoxification of arsenic-containing substance"/>
    <property type="evidence" value="ECO:0000250"/>
    <property type="project" value="UniProtKB"/>
</dbReference>
<dbReference type="GO" id="GO:0015793">
    <property type="term" value="P:glycerol transmembrane transport"/>
    <property type="evidence" value="ECO:0000314"/>
    <property type="project" value="UniProtKB"/>
</dbReference>
<dbReference type="GO" id="GO:0006863">
    <property type="term" value="P:purine nucleobase transport"/>
    <property type="evidence" value="ECO:0000250"/>
    <property type="project" value="UniProtKB"/>
</dbReference>
<dbReference type="GO" id="GO:0015855">
    <property type="term" value="P:pyrimidine nucleobase transport"/>
    <property type="evidence" value="ECO:0000250"/>
    <property type="project" value="UniProtKB"/>
</dbReference>
<dbReference type="GO" id="GO:0071918">
    <property type="term" value="P:urea transmembrane transport"/>
    <property type="evidence" value="ECO:0000315"/>
    <property type="project" value="UniProtKB"/>
</dbReference>
<dbReference type="GO" id="GO:0006833">
    <property type="term" value="P:water transport"/>
    <property type="evidence" value="ECO:0000314"/>
    <property type="project" value="UniProtKB"/>
</dbReference>
<dbReference type="CDD" id="cd00333">
    <property type="entry name" value="MIP"/>
    <property type="match status" value="1"/>
</dbReference>
<dbReference type="FunFam" id="1.20.1080.10:FF:000005">
    <property type="entry name" value="Aquaporin 3"/>
    <property type="match status" value="1"/>
</dbReference>
<dbReference type="Gene3D" id="1.20.1080.10">
    <property type="entry name" value="Glycerol uptake facilitator protein"/>
    <property type="match status" value="1"/>
</dbReference>
<dbReference type="InterPro" id="IPR023271">
    <property type="entry name" value="Aquaporin-like"/>
</dbReference>
<dbReference type="InterPro" id="IPR015685">
    <property type="entry name" value="Aquaporin_9"/>
</dbReference>
<dbReference type="InterPro" id="IPR000425">
    <property type="entry name" value="MIP"/>
</dbReference>
<dbReference type="InterPro" id="IPR050363">
    <property type="entry name" value="MIP/Aquaporin"/>
</dbReference>
<dbReference type="InterPro" id="IPR022357">
    <property type="entry name" value="MIP_CS"/>
</dbReference>
<dbReference type="NCBIfam" id="TIGR00861">
    <property type="entry name" value="MIP"/>
    <property type="match status" value="1"/>
</dbReference>
<dbReference type="PANTHER" id="PTHR43829">
    <property type="entry name" value="AQUAPORIN OR AQUAGLYCEROPORIN RELATED"/>
    <property type="match status" value="1"/>
</dbReference>
<dbReference type="PANTHER" id="PTHR43829:SF6">
    <property type="entry name" value="AQUAPORIN-9"/>
    <property type="match status" value="1"/>
</dbReference>
<dbReference type="Pfam" id="PF00230">
    <property type="entry name" value="MIP"/>
    <property type="match status" value="1"/>
</dbReference>
<dbReference type="PRINTS" id="PR02021">
    <property type="entry name" value="AQUAPORIN9"/>
</dbReference>
<dbReference type="PRINTS" id="PR00783">
    <property type="entry name" value="MINTRINSICP"/>
</dbReference>
<dbReference type="SUPFAM" id="SSF81338">
    <property type="entry name" value="Aquaporin-like"/>
    <property type="match status" value="1"/>
</dbReference>
<dbReference type="PROSITE" id="PS00221">
    <property type="entry name" value="MIP"/>
    <property type="match status" value="1"/>
</dbReference>
<organism>
    <name type="scientific">Homo sapiens</name>
    <name type="common">Human</name>
    <dbReference type="NCBI Taxonomy" id="9606"/>
    <lineage>
        <taxon>Eukaryota</taxon>
        <taxon>Metazoa</taxon>
        <taxon>Chordata</taxon>
        <taxon>Craniata</taxon>
        <taxon>Vertebrata</taxon>
        <taxon>Euteleostomi</taxon>
        <taxon>Mammalia</taxon>
        <taxon>Eutheria</taxon>
        <taxon>Euarchontoglires</taxon>
        <taxon>Primates</taxon>
        <taxon>Haplorrhini</taxon>
        <taxon>Catarrhini</taxon>
        <taxon>Hominidae</taxon>
        <taxon>Homo</taxon>
    </lineage>
</organism>
<protein>
    <recommendedName>
        <fullName evidence="10">Aquaporin-9</fullName>
        <shortName evidence="12">AQP-9</shortName>
    </recommendedName>
    <alternativeName>
        <fullName evidence="14">Aquaglyceroporin-9</fullName>
    </alternativeName>
    <alternativeName>
        <fullName evidence="15">Small solute channel 1</fullName>
    </alternativeName>
</protein>
<reference key="1">
    <citation type="journal article" date="1998" name="Biochem. Biophys. Res. Commun.">
        <title>Cloning and functional expression of a new aquaporin (AQP9) abundantly expressed in the peripheral leukocytes permeable to water and urea, but not to glycerol.</title>
        <authorList>
            <person name="Ishibashi K."/>
            <person name="Kuwahara M."/>
            <person name="Gu Y."/>
            <person name="Tanaka Y."/>
            <person name="Marumo F."/>
            <person name="Sasaki S."/>
        </authorList>
    </citation>
    <scope>NUCLEOTIDE SEQUENCE [MRNA]</scope>
    <scope>FUNCTION</scope>
    <scope>TRANSPORTER ACTIVITY</scope>
    <scope>SUBCELLULAR LOCATION</scope>
    <scope>TISSUE SPECIFICITY</scope>
    <scope>VARIANT ALA-279</scope>
    <source>
        <tissue>Liver</tissue>
    </source>
</reference>
<reference key="2">
    <citation type="journal article" date="1999" name="Am. J. Physiol.">
        <title>Functional and molecular characterization of the human neutral solute channel aquaporin-9.</title>
        <authorList>
            <person name="Tsukaguchi H."/>
            <person name="Weremowicz S."/>
            <person name="Morton C.C."/>
            <person name="Hediger M.A."/>
        </authorList>
    </citation>
    <scope>NUCLEOTIDE SEQUENCE [GENOMIC DNA]</scope>
    <scope>FUNCTION</scope>
    <scope>TRANSPORTER ACTIVITY</scope>
    <scope>SUBCELLULAR LOCATION</scope>
    <scope>TISSUE SPECIFICITY</scope>
    <scope>VARIANT ALA-279</scope>
</reference>
<reference key="3">
    <citation type="journal article" date="2006" name="Nature">
        <title>Analysis of the DNA sequence and duplication history of human chromosome 15.</title>
        <authorList>
            <person name="Zody M.C."/>
            <person name="Garber M."/>
            <person name="Sharpe T."/>
            <person name="Young S.K."/>
            <person name="Rowen L."/>
            <person name="O'Neill K."/>
            <person name="Whittaker C.A."/>
            <person name="Kamal M."/>
            <person name="Chang J.L."/>
            <person name="Cuomo C.A."/>
            <person name="Dewar K."/>
            <person name="FitzGerald M.G."/>
            <person name="Kodira C.D."/>
            <person name="Madan A."/>
            <person name="Qin S."/>
            <person name="Yang X."/>
            <person name="Abbasi N."/>
            <person name="Abouelleil A."/>
            <person name="Arachchi H.M."/>
            <person name="Baradarani L."/>
            <person name="Birditt B."/>
            <person name="Bloom S."/>
            <person name="Bloom T."/>
            <person name="Borowsky M.L."/>
            <person name="Burke J."/>
            <person name="Butler J."/>
            <person name="Cook A."/>
            <person name="DeArellano K."/>
            <person name="DeCaprio D."/>
            <person name="Dorris L. III"/>
            <person name="Dors M."/>
            <person name="Eichler E.E."/>
            <person name="Engels R."/>
            <person name="Fahey J."/>
            <person name="Fleetwood P."/>
            <person name="Friedman C."/>
            <person name="Gearin G."/>
            <person name="Hall J.L."/>
            <person name="Hensley G."/>
            <person name="Johnson E."/>
            <person name="Jones C."/>
            <person name="Kamat A."/>
            <person name="Kaur A."/>
            <person name="Locke D.P."/>
            <person name="Madan A."/>
            <person name="Munson G."/>
            <person name="Jaffe D.B."/>
            <person name="Lui A."/>
            <person name="Macdonald P."/>
            <person name="Mauceli E."/>
            <person name="Naylor J.W."/>
            <person name="Nesbitt R."/>
            <person name="Nicol R."/>
            <person name="O'Leary S.B."/>
            <person name="Ratcliffe A."/>
            <person name="Rounsley S."/>
            <person name="She X."/>
            <person name="Sneddon K.M.B."/>
            <person name="Stewart S."/>
            <person name="Sougnez C."/>
            <person name="Stone S.M."/>
            <person name="Topham K."/>
            <person name="Vincent D."/>
            <person name="Wang S."/>
            <person name="Zimmer A.R."/>
            <person name="Birren B.W."/>
            <person name="Hood L."/>
            <person name="Lander E.S."/>
            <person name="Nusbaum C."/>
        </authorList>
    </citation>
    <scope>NUCLEOTIDE SEQUENCE [LARGE SCALE GENOMIC DNA]</scope>
</reference>
<reference key="4">
    <citation type="journal article" date="2004" name="Genome Res.">
        <title>The status, quality, and expansion of the NIH full-length cDNA project: the Mammalian Gene Collection (MGC).</title>
        <authorList>
            <consortium name="The MGC Project Team"/>
        </authorList>
    </citation>
    <scope>NUCLEOTIDE SEQUENCE [LARGE SCALE MRNA]</scope>
    <scope>VARIANT ALA-279</scope>
    <source>
        <tissue>Liver</tissue>
    </source>
</reference>
<reference key="5">
    <citation type="journal article" date="2016" name="Biochem. Biophys. Res. Commun.">
        <title>Aquaporin-9 facilitates membrane transport of hydrogen peroxide in mammalian cells.</title>
        <authorList>
            <person name="Watanabe S."/>
            <person name="Moniaga C.S."/>
            <person name="Nielsen S."/>
            <person name="Hara-Chikuma M."/>
        </authorList>
    </citation>
    <scope>FUNCTION</scope>
    <scope>TRANSPORTER ACTIVITY</scope>
</reference>
<reference key="6">
    <citation type="journal article" date="2018" name="Nat. Commun.">
        <title>Human adipose glycerol flux is regulated by a pH gate in AQP10.</title>
        <authorList>
            <person name="Gotfryd K."/>
            <person name="Mosca A.F."/>
            <person name="Missel J.W."/>
            <person name="Truelsen S.F."/>
            <person name="Wang K."/>
            <person name="Spulber M."/>
            <person name="Krabbe S."/>
            <person name="Helix-Nielsen C."/>
            <person name="Laforenza U."/>
            <person name="Soveral G."/>
            <person name="Pedersen P.A."/>
            <person name="Gourdon P."/>
        </authorList>
    </citation>
    <scope>FUNCTION</scope>
    <scope>TRANSPORTER ACTIVITY</scope>
</reference>
<reference key="7">
    <citation type="journal article" date="2022" name="Life">
        <title>Lactic Acid Permeability of Aquaporin-9 Enables Cytoplasmic Lactate Accumulation via an Ion Trap.</title>
        <authorList>
            <person name="Geistlinger K."/>
            <person name="Schmidt J.D.R."/>
            <person name="Beitz E."/>
        </authorList>
    </citation>
    <scope>FUNCTION</scope>
    <scope>TRANSPORTER ACTIVITY</scope>
</reference>
<proteinExistence type="evidence at protein level"/>
<evidence type="ECO:0000250" key="1">
    <source>
        <dbReference type="UniProtKB" id="P56627"/>
    </source>
</evidence>
<evidence type="ECO:0000250" key="2">
    <source>
        <dbReference type="UniProtKB" id="Q96PS8"/>
    </source>
</evidence>
<evidence type="ECO:0000250" key="3">
    <source>
        <dbReference type="UniProtKB" id="Q9JJJ3"/>
    </source>
</evidence>
<evidence type="ECO:0000269" key="4">
    <source>
    </source>
</evidence>
<evidence type="ECO:0000269" key="5">
    <source>
    </source>
</evidence>
<evidence type="ECO:0000269" key="6">
    <source>
    </source>
</evidence>
<evidence type="ECO:0000269" key="7">
    <source>
    </source>
</evidence>
<evidence type="ECO:0000269" key="8">
    <source>
    </source>
</evidence>
<evidence type="ECO:0000269" key="9">
    <source>
    </source>
</evidence>
<evidence type="ECO:0000303" key="10">
    <source>
    </source>
</evidence>
<evidence type="ECO:0000305" key="11"/>
<evidence type="ECO:0000305" key="12">
    <source>
    </source>
</evidence>
<evidence type="ECO:0000305" key="13">
    <source>
    </source>
</evidence>
<evidence type="ECO:0000305" key="14">
    <source>
    </source>
</evidence>
<evidence type="ECO:0000312" key="15">
    <source>
        <dbReference type="EMBL" id="AAF16677.1"/>
    </source>
</evidence>
<evidence type="ECO:0000312" key="16">
    <source>
        <dbReference type="HGNC" id="HGNC:643"/>
    </source>
</evidence>
<name>AQP9_HUMAN</name>
<comment type="function">
    <text evidence="1 3 4 6 7 8 9">Aquaglyceroporins form homotetrameric transmembrane channels, with each monomer independently mediating glycerol and water transport across the plasma membrane along their osmotic gradient (PubMed:10564231, PubMed:30420639, PubMed:35054513, PubMed:9514918). AQP9 is the primary route for glycerol uptake in hepatocytes, supporting hepatic gluconeogenesis (By similarity). It exhibits broad specificity and may transport various small, non-charged solutes, including carbamides, polyols, purines, and pyrimidines (PubMed:10564231). AQP9 may also facilitate hepatic urea extrusion (PubMed:10564231, PubMed:9514918). Due to its permeability to lactate, AQP9 might participate in the astrocyte-to-neuron lactate shuttle, supplying neurons with energy (PubMed:10564231, PubMed:35054513). Additionally, AQP9 is permeable to arsenite, contributing to arsenic excretion by the liver and providing partial protection against arsenic toxicity (PubMed:10564231). It is also permeable to H2O2 in vivo (PubMed:26837049). Could also be permeable to ammonium (By similarity).</text>
</comment>
<comment type="catalytic activity">
    <reaction evidence="4 7 8">
        <text>glycerol(in) = glycerol(out)</text>
        <dbReference type="Rhea" id="RHEA:29675"/>
        <dbReference type="ChEBI" id="CHEBI:17754"/>
    </reaction>
</comment>
<comment type="catalytic activity">
    <reaction evidence="7 9">
        <text>H2O(in) = H2O(out)</text>
        <dbReference type="Rhea" id="RHEA:29667"/>
        <dbReference type="ChEBI" id="CHEBI:15377"/>
    </reaction>
</comment>
<comment type="catalytic activity">
    <reaction evidence="4 9">
        <text>urea(in) = urea(out)</text>
        <dbReference type="Rhea" id="RHEA:32799"/>
        <dbReference type="ChEBI" id="CHEBI:16199"/>
    </reaction>
</comment>
<comment type="catalytic activity">
    <reaction evidence="4 8">
        <text>(S)-lactate(in) = (S)-lactate(out)</text>
        <dbReference type="Rhea" id="RHEA:34987"/>
        <dbReference type="ChEBI" id="CHEBI:16651"/>
    </reaction>
</comment>
<comment type="catalytic activity">
    <reaction evidence="1">
        <text>NH4(+)(in) = NH4(+)(out)</text>
        <dbReference type="Rhea" id="RHEA:28747"/>
        <dbReference type="ChEBI" id="CHEBI:28938"/>
    </reaction>
</comment>
<comment type="catalytic activity">
    <reaction evidence="12">
        <text>uracil(in) = uracil(out)</text>
        <dbReference type="Rhea" id="RHEA:69404"/>
        <dbReference type="ChEBI" id="CHEBI:17568"/>
    </reaction>
</comment>
<comment type="catalytic activity">
    <reaction evidence="12">
        <text>adenine(out) = adenine(in)</text>
        <dbReference type="Rhea" id="RHEA:71523"/>
        <dbReference type="ChEBI" id="CHEBI:16708"/>
    </reaction>
</comment>
<comment type="catalytic activity">
    <reaction evidence="12">
        <text>3-hydroxybutanoate(in) = 3-hydroxybutanoate(out)</text>
        <dbReference type="Rhea" id="RHEA:81351"/>
        <dbReference type="ChEBI" id="CHEBI:37054"/>
    </reaction>
</comment>
<comment type="catalytic activity">
    <reaction evidence="12">
        <text>D-sorbitol(in) = D-sorbitol(out)</text>
        <dbReference type="Rhea" id="RHEA:81359"/>
        <dbReference type="ChEBI" id="CHEBI:17924"/>
    </reaction>
</comment>
<comment type="catalytic activity">
    <reaction evidence="12">
        <text>D-mannitol(in) = D-mannitol(out)</text>
        <dbReference type="Rhea" id="RHEA:81355"/>
        <dbReference type="ChEBI" id="CHEBI:16899"/>
    </reaction>
</comment>
<comment type="catalytic activity">
    <reaction evidence="13">
        <text>H2O2(out) = H2O2(in)</text>
        <dbReference type="Rhea" id="RHEA:74375"/>
        <dbReference type="ChEBI" id="CHEBI:16240"/>
    </reaction>
</comment>
<comment type="catalytic activity">
    <reaction evidence="12">
        <text>arsenite(in) = arsenite(out)</text>
        <dbReference type="Rhea" id="RHEA:81347"/>
        <dbReference type="ChEBI" id="CHEBI:29242"/>
    </reaction>
</comment>
<comment type="catalytic activity">
    <reaction evidence="12">
        <text>selenite(in) = selenite(out)</text>
        <dbReference type="Rhea" id="RHEA:34891"/>
        <dbReference type="ChEBI" id="CHEBI:18212"/>
    </reaction>
</comment>
<comment type="subunit">
    <text evidence="2">Homotetramer; each monomer provides an independent glycerol/water pore.</text>
</comment>
<comment type="interaction">
    <interactant intactId="EBI-17444777">
        <id>O43315</id>
    </interactant>
    <interactant intactId="EBI-10225815">
        <id>Q08AM2</id>
        <label>ADAM33</label>
    </interactant>
    <organismsDiffer>false</organismsDiffer>
    <experiments>3</experiments>
</comment>
<comment type="interaction">
    <interactant intactId="EBI-17444777">
        <id>O43315</id>
    </interactant>
    <interactant intactId="EBI-11957045">
        <id>Q9NVV5-2</id>
        <label>AIG1</label>
    </interactant>
    <organismsDiffer>false</organismsDiffer>
    <experiments>3</experiments>
</comment>
<comment type="interaction">
    <interactant intactId="EBI-17444777">
        <id>O43315</id>
    </interactant>
    <interactant intactId="EBI-715495">
        <id>P05090</id>
        <label>APOD</label>
    </interactant>
    <organismsDiffer>false</organismsDiffer>
    <experiments>3</experiments>
</comment>
<comment type="interaction">
    <interactant intactId="EBI-17444777">
        <id>O43315</id>
    </interactant>
    <interactant intactId="EBI-9083477">
        <id>Q9P0B6</id>
        <label>CCDC167</label>
    </interactant>
    <organismsDiffer>false</organismsDiffer>
    <experiments>3</experiments>
</comment>
<comment type="interaction">
    <interactant intactId="EBI-17444777">
        <id>O43315</id>
    </interactant>
    <interactant intactId="EBI-12256978">
        <id>Q8N6F1-2</id>
        <label>CLDN19</label>
    </interactant>
    <organismsDiffer>false</organismsDiffer>
    <experiments>3</experiments>
</comment>
<comment type="interaction">
    <interactant intactId="EBI-17444777">
        <id>O43315</id>
    </interactant>
    <interactant intactId="EBI-18013275">
        <id>Q7Z7G2</id>
        <label>CPLX4</label>
    </interactant>
    <organismsDiffer>false</organismsDiffer>
    <experiments>3</experiments>
</comment>
<comment type="interaction">
    <interactant intactId="EBI-17444777">
        <id>O43315</id>
    </interactant>
    <interactant intactId="EBI-12019274">
        <id>Q4LDR2</id>
        <label>CTXN3</label>
    </interactant>
    <organismsDiffer>false</organismsDiffer>
    <experiments>3</experiments>
</comment>
<comment type="interaction">
    <interactant intactId="EBI-17444777">
        <id>O43315</id>
    </interactant>
    <interactant intactId="EBI-2820492">
        <id>Q9BV81</id>
        <label>EMC6</label>
    </interactant>
    <organismsDiffer>false</organismsDiffer>
    <experiments>3</experiments>
</comment>
<comment type="interaction">
    <interactant intactId="EBI-17444777">
        <id>O43315</id>
    </interactant>
    <interactant intactId="EBI-12175685">
        <id>Q14802-3</id>
        <label>FXYD3</label>
    </interactant>
    <organismsDiffer>false</organismsDiffer>
    <experiments>3</experiments>
</comment>
<comment type="interaction">
    <interactant intactId="EBI-17444777">
        <id>O43315</id>
    </interactant>
    <interactant intactId="EBI-746917">
        <id>O75084</id>
        <label>FZD7</label>
    </interactant>
    <organismsDiffer>false</organismsDiffer>
    <experiments>3</experiments>
</comment>
<comment type="interaction">
    <interactant intactId="EBI-17444777">
        <id>O43315</id>
    </interactant>
    <interactant intactId="EBI-3436637">
        <id>P01350</id>
        <label>GAST</label>
    </interactant>
    <organismsDiffer>false</organismsDiffer>
    <experiments>3</experiments>
</comment>
<comment type="interaction">
    <interactant intactId="EBI-17444777">
        <id>O43315</id>
    </interactant>
    <interactant intactId="EBI-2867874">
        <id>Q9UM44</id>
        <label>HHLA2</label>
    </interactant>
    <organismsDiffer>false</organismsDiffer>
    <experiments>3</experiments>
</comment>
<comment type="interaction">
    <interactant intactId="EBI-17444777">
        <id>O43315</id>
    </interactant>
    <interactant intactId="EBI-720480">
        <id>P24593</id>
        <label>IGFBP5</label>
    </interactant>
    <organismsDiffer>false</organismsDiffer>
    <experiments>3</experiments>
</comment>
<comment type="interaction">
    <interactant intactId="EBI-17444777">
        <id>O43315</id>
    </interactant>
    <interactant intactId="EBI-2820517">
        <id>Q8TAF8</id>
        <label>LHFPL5</label>
    </interactant>
    <organismsDiffer>false</organismsDiffer>
    <experiments>3</experiments>
</comment>
<comment type="interaction">
    <interactant intactId="EBI-17444777">
        <id>O43315</id>
    </interactant>
    <interactant intactId="EBI-8449636">
        <id>P30301</id>
        <label>MIP</label>
    </interactant>
    <organismsDiffer>false</organismsDiffer>
    <experiments>3</experiments>
</comment>
<comment type="interaction">
    <interactant intactId="EBI-17444777">
        <id>O43315</id>
    </interactant>
    <interactant intactId="EBI-465167">
        <id>P09466</id>
        <label>PAEP</label>
    </interactant>
    <organismsDiffer>false</organismsDiffer>
    <experiments>3</experiments>
</comment>
<comment type="interaction">
    <interactant intactId="EBI-17444777">
        <id>O43315</id>
    </interactant>
    <interactant intactId="EBI-2683145">
        <id>Q9NRX5</id>
        <label>SERINC1</label>
    </interactant>
    <organismsDiffer>false</organismsDiffer>
    <experiments>3</experiments>
</comment>
<comment type="interaction">
    <interactant intactId="EBI-17444777">
        <id>O43315</id>
    </interactant>
    <interactant intactId="EBI-1046170">
        <id>O95470</id>
        <label>SGPL1</label>
    </interactant>
    <organismsDiffer>false</organismsDiffer>
    <experiments>3</experiments>
</comment>
<comment type="interaction">
    <interactant intactId="EBI-17444777">
        <id>O43315</id>
    </interactant>
    <interactant intactId="EBI-10314552">
        <id>Q9NVC3</id>
        <label>SLC38A7</label>
    </interactant>
    <organismsDiffer>false</organismsDiffer>
    <experiments>3</experiments>
</comment>
<comment type="interaction">
    <interactant intactId="EBI-17444777">
        <id>O43315</id>
    </interactant>
    <interactant intactId="EBI-714319">
        <id>P02787</id>
        <label>TF</label>
    </interactant>
    <organismsDiffer>false</organismsDiffer>
    <experiments>3</experiments>
</comment>
<comment type="interaction">
    <interactant intactId="EBI-17444777">
        <id>O43315</id>
    </interactant>
    <interactant intactId="EBI-1056827">
        <id>Q9BVK6</id>
        <label>TMED9</label>
    </interactant>
    <organismsDiffer>false</organismsDiffer>
    <experiments>3</experiments>
</comment>
<comment type="interaction">
    <interactant intactId="EBI-17444777">
        <id>O43315</id>
    </interactant>
    <interactant intactId="EBI-1057733">
        <id>Q9BVC6</id>
        <label>TMEM109</label>
    </interactant>
    <organismsDiffer>false</organismsDiffer>
    <experiments>3</experiments>
</comment>
<comment type="subcellular location">
    <subcellularLocation>
        <location evidence="4 9">Cell membrane</location>
        <topology evidence="2">Multi-pass membrane protein</topology>
    </subcellularLocation>
    <subcellularLocation>
        <location evidence="3">Basolateral cell membrane</location>
        <topology evidence="2">Multi-pass membrane protein</topology>
    </subcellularLocation>
    <text evidence="3">Functions at the hepatocyte basolateral membrane.</text>
</comment>
<comment type="tissue specificity">
    <text evidence="4 9">Highly expressed in peripheral leukocytes. Also expressed in liver, lung, and spleen.</text>
</comment>
<comment type="domain">
    <text evidence="2">Aquaporins contain two tandem repeats each containing three membrane-spanning domains and a pore-forming loop with the signature motif Asn-Pro-Ala (NPA).</text>
</comment>
<comment type="similarity">
    <text evidence="11">Belongs to the MIP/aquaporin (TC 1.A.8) family.</text>
</comment>
<gene>
    <name evidence="16" type="primary">AQP9</name>
    <name evidence="15" type="synonym">SSC1</name>
</gene>